<evidence type="ECO:0000250" key="1">
    <source>
        <dbReference type="UniProtKB" id="Q8BKJ9"/>
    </source>
</evidence>
<evidence type="ECO:0000250" key="2">
    <source>
        <dbReference type="UniProtKB" id="Q9NRC8"/>
    </source>
</evidence>
<evidence type="ECO:0000250" key="3">
    <source>
        <dbReference type="UniProtKB" id="Q9NXA8"/>
    </source>
</evidence>
<evidence type="ECO:0000255" key="4">
    <source>
        <dbReference type="PROSITE-ProRule" id="PRU00236"/>
    </source>
</evidence>
<evidence type="ECO:0000256" key="5">
    <source>
        <dbReference type="SAM" id="MobiDB-lite"/>
    </source>
</evidence>
<evidence type="ECO:0000305" key="6"/>
<evidence type="ECO:0000312" key="7">
    <source>
        <dbReference type="RGD" id="1305876"/>
    </source>
</evidence>
<dbReference type="EC" id="2.3.1.286" evidence="4"/>
<dbReference type="EC" id="2.3.1.-" evidence="2"/>
<dbReference type="EMBL" id="CH473948">
    <property type="protein sequence ID" value="EDM06872.1"/>
    <property type="molecule type" value="Genomic_DNA"/>
</dbReference>
<dbReference type="EMBL" id="BC167031">
    <property type="protein sequence ID" value="AAI67031.1"/>
    <property type="molecule type" value="mRNA"/>
</dbReference>
<dbReference type="RefSeq" id="NP_001100543.1">
    <property type="nucleotide sequence ID" value="NM_001107073.1"/>
</dbReference>
<dbReference type="SMR" id="B2RZ55"/>
<dbReference type="FunCoup" id="B2RZ55">
    <property type="interactions" value="444"/>
</dbReference>
<dbReference type="STRING" id="10116.ENSRNOP00000051834"/>
<dbReference type="PhosphoSitePlus" id="B2RZ55"/>
<dbReference type="PaxDb" id="10116-ENSRNOP00000051834"/>
<dbReference type="PeptideAtlas" id="B2RZ55"/>
<dbReference type="Ensembl" id="ENSRNOT00000054951.5">
    <property type="protein sequence ID" value="ENSRNOP00000051834.3"/>
    <property type="gene ID" value="ENSRNOG00000036683.5"/>
</dbReference>
<dbReference type="GeneID" id="303745"/>
<dbReference type="KEGG" id="rno:303745"/>
<dbReference type="AGR" id="RGD:1305876"/>
<dbReference type="CTD" id="51547"/>
<dbReference type="RGD" id="1305876">
    <property type="gene designation" value="Sirt7"/>
</dbReference>
<dbReference type="eggNOG" id="KOG1905">
    <property type="taxonomic scope" value="Eukaryota"/>
</dbReference>
<dbReference type="GeneTree" id="ENSGT00940000159703"/>
<dbReference type="HOGENOM" id="CLU_023643_6_2_1"/>
<dbReference type="InParanoid" id="B2RZ55"/>
<dbReference type="OMA" id="SNREYCK"/>
<dbReference type="OrthoDB" id="2919105at2759"/>
<dbReference type="PhylomeDB" id="B2RZ55"/>
<dbReference type="PRO" id="PR:B2RZ55"/>
<dbReference type="Proteomes" id="UP000002494">
    <property type="component" value="Chromosome 10"/>
</dbReference>
<dbReference type="Proteomes" id="UP000234681">
    <property type="component" value="Chromosome 10"/>
</dbReference>
<dbReference type="Bgee" id="ENSRNOG00000036683">
    <property type="expression patterns" value="Expressed in thymus and 20 other cell types or tissues"/>
</dbReference>
<dbReference type="GO" id="GO:0000785">
    <property type="term" value="C:chromatin"/>
    <property type="evidence" value="ECO:0000250"/>
    <property type="project" value="UniProtKB"/>
</dbReference>
<dbReference type="GO" id="GO:0005737">
    <property type="term" value="C:cytoplasm"/>
    <property type="evidence" value="ECO:0007669"/>
    <property type="project" value="UniProtKB-SubCell"/>
</dbReference>
<dbReference type="GO" id="GO:0005730">
    <property type="term" value="C:nucleolus"/>
    <property type="evidence" value="ECO:0000266"/>
    <property type="project" value="RGD"/>
</dbReference>
<dbReference type="GO" id="GO:0005731">
    <property type="term" value="C:nucleolus organizer region"/>
    <property type="evidence" value="ECO:0000266"/>
    <property type="project" value="RGD"/>
</dbReference>
<dbReference type="GO" id="GO:0005654">
    <property type="term" value="C:nucleoplasm"/>
    <property type="evidence" value="ECO:0000266"/>
    <property type="project" value="RGD"/>
</dbReference>
<dbReference type="GO" id="GO:0005634">
    <property type="term" value="C:nucleus"/>
    <property type="evidence" value="ECO:0000266"/>
    <property type="project" value="RGD"/>
</dbReference>
<dbReference type="GO" id="GO:0035861">
    <property type="term" value="C:site of double-strand break"/>
    <property type="evidence" value="ECO:0000250"/>
    <property type="project" value="UniProtKB"/>
</dbReference>
<dbReference type="GO" id="GO:0003682">
    <property type="term" value="F:chromatin binding"/>
    <property type="evidence" value="ECO:0000250"/>
    <property type="project" value="UniProtKB"/>
</dbReference>
<dbReference type="GO" id="GO:0097372">
    <property type="term" value="F:histone H3K18 deacetylase activity, NAD-dependent"/>
    <property type="evidence" value="ECO:0000250"/>
    <property type="project" value="UniProtKB"/>
</dbReference>
<dbReference type="GO" id="GO:0046872">
    <property type="term" value="F:metal ion binding"/>
    <property type="evidence" value="ECO:0007669"/>
    <property type="project" value="UniProtKB-KW"/>
</dbReference>
<dbReference type="GO" id="GO:0070403">
    <property type="term" value="F:NAD+ binding"/>
    <property type="evidence" value="ECO:0000318"/>
    <property type="project" value="GO_Central"/>
</dbReference>
<dbReference type="GO" id="GO:0034979">
    <property type="term" value="F:NAD-dependent protein lysine deacetylase activity"/>
    <property type="evidence" value="ECO:0000250"/>
    <property type="project" value="UniProtKB"/>
</dbReference>
<dbReference type="GO" id="GO:0106231">
    <property type="term" value="F:NAD-dependent protein-lysine depropionylase activity"/>
    <property type="evidence" value="ECO:0000250"/>
    <property type="project" value="UniProtKB"/>
</dbReference>
<dbReference type="GO" id="GO:0008276">
    <property type="term" value="F:protein methyltransferase activity"/>
    <property type="evidence" value="ECO:0000266"/>
    <property type="project" value="RGD"/>
</dbReference>
<dbReference type="GO" id="GO:0061697">
    <property type="term" value="F:protein-glutaryllysine deglutarylase activity"/>
    <property type="evidence" value="ECO:0000250"/>
    <property type="project" value="UniProtKB"/>
</dbReference>
<dbReference type="GO" id="GO:0036055">
    <property type="term" value="F:protein-succinyllysine desuccinylase activity"/>
    <property type="evidence" value="ECO:0000250"/>
    <property type="project" value="UniProtKB"/>
</dbReference>
<dbReference type="GO" id="GO:0006974">
    <property type="term" value="P:DNA damage response"/>
    <property type="evidence" value="ECO:0000266"/>
    <property type="project" value="RGD"/>
</dbReference>
<dbReference type="GO" id="GO:0006281">
    <property type="term" value="P:DNA repair"/>
    <property type="evidence" value="ECO:0007669"/>
    <property type="project" value="UniProtKB-KW"/>
</dbReference>
<dbReference type="GO" id="GO:0140861">
    <property type="term" value="P:DNA repair-dependent chromatin remodeling"/>
    <property type="evidence" value="ECO:0000250"/>
    <property type="project" value="UniProtKB"/>
</dbReference>
<dbReference type="GO" id="GO:0007129">
    <property type="term" value="P:homologous chromosome pairing at meiosis"/>
    <property type="evidence" value="ECO:0000250"/>
    <property type="project" value="UniProtKB"/>
</dbReference>
<dbReference type="GO" id="GO:0045814">
    <property type="term" value="P:negative regulation of gene expression, epigenetic"/>
    <property type="evidence" value="ECO:0000266"/>
    <property type="project" value="RGD"/>
</dbReference>
<dbReference type="GO" id="GO:0051898">
    <property type="term" value="P:negative regulation of phosphatidylinositol 3-kinase/protein kinase B signal transduction"/>
    <property type="evidence" value="ECO:0000266"/>
    <property type="project" value="RGD"/>
</dbReference>
<dbReference type="GO" id="GO:0031397">
    <property type="term" value="P:negative regulation of protein ubiquitination"/>
    <property type="evidence" value="ECO:0000250"/>
    <property type="project" value="UniProtKB"/>
</dbReference>
<dbReference type="GO" id="GO:0000122">
    <property type="term" value="P:negative regulation of transcription by RNA polymerase II"/>
    <property type="evidence" value="ECO:0000250"/>
    <property type="project" value="UniProtKB"/>
</dbReference>
<dbReference type="GO" id="GO:0001649">
    <property type="term" value="P:osteoblast differentiation"/>
    <property type="evidence" value="ECO:0000250"/>
    <property type="project" value="UniProtKB"/>
</dbReference>
<dbReference type="GO" id="GO:0045722">
    <property type="term" value="P:positive regulation of gluconeogenesis"/>
    <property type="evidence" value="ECO:0000250"/>
    <property type="project" value="UniProtKB"/>
</dbReference>
<dbReference type="GO" id="GO:2000234">
    <property type="term" value="P:positive regulation of rRNA processing"/>
    <property type="evidence" value="ECO:0000250"/>
    <property type="project" value="UniProtKB"/>
</dbReference>
<dbReference type="GO" id="GO:0045943">
    <property type="term" value="P:positive regulation of transcription by RNA polymerase I"/>
    <property type="evidence" value="ECO:0000250"/>
    <property type="project" value="UniProtKB"/>
</dbReference>
<dbReference type="GO" id="GO:0006476">
    <property type="term" value="P:protein deacetylation"/>
    <property type="evidence" value="ECO:0000250"/>
    <property type="project" value="UniProtKB"/>
</dbReference>
<dbReference type="GO" id="GO:0061698">
    <property type="term" value="P:protein deglutarylation"/>
    <property type="evidence" value="ECO:0000250"/>
    <property type="project" value="UniProtKB"/>
</dbReference>
<dbReference type="GO" id="GO:0106230">
    <property type="term" value="P:protein depropionylation"/>
    <property type="evidence" value="ECO:0000250"/>
    <property type="project" value="UniProtKB"/>
</dbReference>
<dbReference type="GO" id="GO:0062176">
    <property type="term" value="P:R-loop processing"/>
    <property type="evidence" value="ECO:0000250"/>
    <property type="project" value="UniProtKB"/>
</dbReference>
<dbReference type="GO" id="GO:0006282">
    <property type="term" value="P:regulation of DNA repair"/>
    <property type="evidence" value="ECO:0000266"/>
    <property type="project" value="RGD"/>
</dbReference>
<dbReference type="GO" id="GO:0010821">
    <property type="term" value="P:regulation of mitochondrion organization"/>
    <property type="evidence" value="ECO:0000250"/>
    <property type="project" value="UniProtKB"/>
</dbReference>
<dbReference type="GO" id="GO:0046825">
    <property type="term" value="P:regulation of protein export from nucleus"/>
    <property type="evidence" value="ECO:0000250"/>
    <property type="project" value="UniProtKB"/>
</dbReference>
<dbReference type="GO" id="GO:0006357">
    <property type="term" value="P:regulation of transcription by RNA polymerase II"/>
    <property type="evidence" value="ECO:0000250"/>
    <property type="project" value="UniProtKB"/>
</dbReference>
<dbReference type="GO" id="GO:1901836">
    <property type="term" value="P:regulation of transcription of nucleolar large rRNA by RNA polymerase I"/>
    <property type="evidence" value="ECO:0000250"/>
    <property type="project" value="UniProtKB"/>
</dbReference>
<dbReference type="GO" id="GO:0009303">
    <property type="term" value="P:rRNA transcription"/>
    <property type="evidence" value="ECO:0000266"/>
    <property type="project" value="RGD"/>
</dbReference>
<dbReference type="GO" id="GO:0045815">
    <property type="term" value="P:transcription initiation-coupled chromatin remodeling"/>
    <property type="evidence" value="ECO:0000266"/>
    <property type="project" value="RGD"/>
</dbReference>
<dbReference type="GO" id="GO:0010526">
    <property type="term" value="P:transposable element silencing"/>
    <property type="evidence" value="ECO:0000250"/>
    <property type="project" value="UniProtKB"/>
</dbReference>
<dbReference type="CDD" id="cd01410">
    <property type="entry name" value="SIRT7"/>
    <property type="match status" value="1"/>
</dbReference>
<dbReference type="FunFam" id="2.20.28.200:FF:000002">
    <property type="entry name" value="NAD-dependent deacetylase sirtuin-7"/>
    <property type="match status" value="1"/>
</dbReference>
<dbReference type="FunFam" id="3.40.50.1220:FF:000038">
    <property type="entry name" value="NAD-dependent protein deacetylase sirtuin-6 isoform X2"/>
    <property type="match status" value="1"/>
</dbReference>
<dbReference type="Gene3D" id="2.20.28.200">
    <property type="match status" value="1"/>
</dbReference>
<dbReference type="Gene3D" id="3.40.50.1220">
    <property type="entry name" value="TPP-binding domain"/>
    <property type="match status" value="1"/>
</dbReference>
<dbReference type="InterPro" id="IPR029035">
    <property type="entry name" value="DHS-like_NAD/FAD-binding_dom"/>
</dbReference>
<dbReference type="InterPro" id="IPR050134">
    <property type="entry name" value="NAD-dep_sirtuin_deacylases"/>
</dbReference>
<dbReference type="InterPro" id="IPR003000">
    <property type="entry name" value="Sirtuin"/>
</dbReference>
<dbReference type="InterPro" id="IPR026590">
    <property type="entry name" value="Ssirtuin_cat_dom"/>
</dbReference>
<dbReference type="PANTHER" id="PTHR11085:SF1">
    <property type="entry name" value="NAD-DEPENDENT PROTEIN DEACETYLASE SIRTUIN-7"/>
    <property type="match status" value="1"/>
</dbReference>
<dbReference type="PANTHER" id="PTHR11085">
    <property type="entry name" value="NAD-DEPENDENT PROTEIN DEACYLASE SIRTUIN-5, MITOCHONDRIAL-RELATED"/>
    <property type="match status" value="1"/>
</dbReference>
<dbReference type="Pfam" id="PF02146">
    <property type="entry name" value="SIR2"/>
    <property type="match status" value="1"/>
</dbReference>
<dbReference type="SUPFAM" id="SSF52467">
    <property type="entry name" value="DHS-like NAD/FAD-binding domain"/>
    <property type="match status" value="1"/>
</dbReference>
<dbReference type="PROSITE" id="PS50305">
    <property type="entry name" value="SIRTUIN"/>
    <property type="match status" value="1"/>
</dbReference>
<sequence length="402" mass="45113">MAAGGGLSRSERKAAERVRRLREEQQRERLRQVSRILRKAAAERSAEEGRLLAESEDLVTELQGRSRRREGLKRRQEEVCDDPEELRRKVRELAGAVRSARHLVVYTGAGISTAASIPDYRGPNGVWTLLQKGRPVSAADLSEAEPTLTHMSITQLHKHKLVQHVVSQNCDGLHLRSGLPRTAISELHGNMYIEVCTSCIPNREYVRVFDVTERTALHRHLTGRTCHKCGTQLRDTIVHFGERGTLGQPLNWEAATEAASKADTILCLGSSLKVLKKYPRLWCMTKPPSRRPKLYIVNLQWTPKDDWAALKLHGKCDDVMRLLMDELGLEIPVYNRWQDPIFSLATPLRAGEEGSHSRKSLCRSREEPPPGDQSAPLASATPILGGWFGRGCAKRAKRKKAA</sequence>
<keyword id="KW-0156">Chromatin regulator</keyword>
<keyword id="KW-0158">Chromosome</keyword>
<keyword id="KW-0963">Cytoplasm</keyword>
<keyword id="KW-0227">DNA damage</keyword>
<keyword id="KW-0234">DNA repair</keyword>
<keyword id="KW-0479">Metal-binding</keyword>
<keyword id="KW-0488">Methylation</keyword>
<keyword id="KW-0520">NAD</keyword>
<keyword id="KW-0539">Nucleus</keyword>
<keyword id="KW-0597">Phosphoprotein</keyword>
<keyword id="KW-1185">Reference proteome</keyword>
<keyword id="KW-0678">Repressor</keyword>
<keyword id="KW-0804">Transcription</keyword>
<keyword id="KW-0805">Transcription regulation</keyword>
<keyword id="KW-0808">Transferase</keyword>
<keyword id="KW-0832">Ubl conjugation</keyword>
<keyword id="KW-0862">Zinc</keyword>
<gene>
    <name evidence="7" type="primary">Sirt7</name>
</gene>
<proteinExistence type="evidence at transcript level"/>
<accession>B2RZ55</accession>
<accession>F1LQY4</accession>
<feature type="chain" id="PRO_0000419985" description="NAD-dependent protein deacetylase sirtuin-7">
    <location>
        <begin position="1"/>
        <end position="402"/>
    </location>
</feature>
<feature type="domain" description="Deacetylase sirtuin-type" evidence="4">
    <location>
        <begin position="83"/>
        <end position="330"/>
    </location>
</feature>
<feature type="region of interest" description="Disordered" evidence="5">
    <location>
        <begin position="1"/>
        <end position="25"/>
    </location>
</feature>
<feature type="region of interest" description="Disordered" evidence="5">
    <location>
        <begin position="59"/>
        <end position="78"/>
    </location>
</feature>
<feature type="region of interest" description="Disordered" evidence="5">
    <location>
        <begin position="355"/>
        <end position="385"/>
    </location>
</feature>
<feature type="compositionally biased region" description="Basic and acidic residues" evidence="5">
    <location>
        <begin position="9"/>
        <end position="25"/>
    </location>
</feature>
<feature type="active site" description="Proton acceptor" evidence="4">
    <location>
        <position position="188"/>
    </location>
</feature>
<feature type="binding site" evidence="3">
    <location>
        <begin position="108"/>
        <end position="127"/>
    </location>
    <ligand>
        <name>NAD(+)</name>
        <dbReference type="ChEBI" id="CHEBI:57540"/>
    </ligand>
</feature>
<feature type="binding site" evidence="3">
    <location>
        <begin position="168"/>
        <end position="171"/>
    </location>
    <ligand>
        <name>NAD(+)</name>
        <dbReference type="ChEBI" id="CHEBI:57540"/>
    </ligand>
</feature>
<feature type="binding site" evidence="4">
    <location>
        <position position="196"/>
    </location>
    <ligand>
        <name>Zn(2+)</name>
        <dbReference type="ChEBI" id="CHEBI:29105"/>
    </ligand>
</feature>
<feature type="binding site" evidence="4">
    <location>
        <position position="199"/>
    </location>
    <ligand>
        <name>Zn(2+)</name>
        <dbReference type="ChEBI" id="CHEBI:29105"/>
    </ligand>
</feature>
<feature type="binding site" evidence="4">
    <location>
        <position position="226"/>
    </location>
    <ligand>
        <name>Zn(2+)</name>
        <dbReference type="ChEBI" id="CHEBI:29105"/>
    </ligand>
</feature>
<feature type="binding site" evidence="4">
    <location>
        <position position="229"/>
    </location>
    <ligand>
        <name>Zn(2+)</name>
        <dbReference type="ChEBI" id="CHEBI:29105"/>
    </ligand>
</feature>
<feature type="binding site" evidence="3">
    <location>
        <begin position="269"/>
        <end position="271"/>
    </location>
    <ligand>
        <name>NAD(+)</name>
        <dbReference type="ChEBI" id="CHEBI:57540"/>
    </ligand>
</feature>
<feature type="binding site" evidence="3">
    <location>
        <begin position="298"/>
        <end position="300"/>
    </location>
    <ligand>
        <name>NAD(+)</name>
        <dbReference type="ChEBI" id="CHEBI:57540"/>
    </ligand>
</feature>
<feature type="binding site" evidence="3">
    <location>
        <position position="316"/>
    </location>
    <ligand>
        <name>NAD(+)</name>
        <dbReference type="ChEBI" id="CHEBI:57540"/>
    </ligand>
</feature>
<feature type="modified residue" description="Asymmetric dimethylarginine; alternate" evidence="2">
    <location>
        <position position="390"/>
    </location>
</feature>
<feature type="modified residue" description="Omega-N-methylarginine; alternate" evidence="2">
    <location>
        <position position="390"/>
    </location>
</feature>
<comment type="function">
    <text evidence="1 2">NAD-dependent protein-lysine deacylase that can act both as a deacetylase or deacylase (desuccinylase, depropionylase, deglutarylase and dedecanoylase), depending on the context. Specifically mediates deacetylation of histone H3 at 'Lys-18' (H3K18Ac). In contrast to other histone deacetylases, displays strong preference for a specific histone mark, H3K18Ac, directly linked to control of gene expression. H3K18Ac is mainly present around the transcription start site of genes and has been linked to activation of nuclear hormone receptors; SIRT7 thereby acts as a transcription repressor. Moreover, H3K18 hypoacetylation has been reported as a marker of malignancy in various cancers and seems to maintain the transformed phenotype of cancer cells. Also able to mediate deacetylation of histone H3 at 'Lys-36' (H3K36Ac) in the context of nucleosomes. Also mediates deacetylation of non-histone proteins, such as ATM, CDK9, DDX21, DDB1, FBL, FKBP5/FKBP51, GABPB1, RAN, RRP9/U3-55K and POLR1E/PAF53. Enriched in nucleolus where it stimulates transcription activity of the RNA polymerase I complex. Acts by mediating the deacetylation of the RNA polymerase I subunit POLR1E/PAF53, thereby promoting the association of RNA polymerase I with the rDNA promoter region and coding region. In response to metabolic stress, SIRT7 is released from nucleoli leading to hyperacetylation of POLR1E/PAF53 and decreased RNA polymerase I transcription. Required to restore the transcription of ribosomal RNA (rRNA) at the exit from mitosis. Promotes pre-ribosomal RNA (pre-rRNA) cleavage at the 5'-terminal processing site by mediating deacetylation of RRP9/U3-55K, a core subunit of the U3 snoRNP complex. Mediates 'Lys-37' deacetylation of Ran, thereby regulating the nuclear export of NF-kappa-B subunit RELA/p65. Acts as a regulator of DNA damage repair by mediating deacetylation of ATM during the late stages of DNA damage response, promoting ATM dephosphorylation and deactivation. Suppresses the activity of the DCX (DDB1-CUL4-X-box) E3 ubiquitin-protein ligase complexes by mediating deacetylation of DDB1, which prevents the interaction between DDB1 and CUL4 (CUL4A or CUL4B). Activates RNA polymerase II transcription by mediating deacetylation of CDK9, thereby promoting 'Ser-2' phosphorylation of the C-terminal domain (CTD) of RNA polymerase II. Deacetylates FBL, promoting histone-glutamine methyltransferase activity of FBL (By similarity). Acts as a regulator of mitochondrial function by catalyzing deacetylation of GABPB1 (By similarity). Regulates Akt/AKT1 activity by mediating deacetylation of FKBP5/FKBP51. Required to prevent R-loop-associated DNA damage and transcription-associated genomic instability by mediating deacetylation and subsequent activation of DDX21, thereby overcoming R-loop-mediated stalling of RNA polymerases. In addition to protein deacetylase activity, also acts as a protein-lysine deacylase (By similarity). Acts as a protein depropionylase by mediating depropionylation of Osterix (SP7), thereby regulating bone formation by osteoblasts (By similarity). Acts as a histone deglutarylase by mediating deglutarylation of histone H4 on 'Lys-91' (H4K91glu); a mark that destabilizes nucleosomes by promoting dissociation of the H2A-H2B dimers from nucleosomes. Acts as a histone desuccinylase: in response to DNA damage, recruited to DNA double-strand breaks (DSBs) and catalyzes desuccinylation of histone H3 on 'Lys-122' (H3K122succ), thereby promoting chromatin condensation and DSB repair (By similarity). Also promotes DSB repair by promoting H3K18Ac deacetylation, regulating non-homologous end joining (NHEJ). Along with its role in DNA repair, required for chromosome synapsis during prophase I of female meiosis by catalyzing H3K18Ac deacetylation (By similarity). Involved in transcriptional repression of LINE-1 retrotransposon via H3K18Ac deacetylation, and promotes their association with the nuclear lamina. Required to stabilize ribosomal DNA (rDNA) heterochromatin and prevent cellular senescence induced by rDNA instability (By similarity). Acts as a negative regulator of SIRT1 by preventing autodeacetylation of SIRT1, restricting SIRT1 deacetylase activity (By similarity).</text>
</comment>
<comment type="catalytic activity">
    <reaction evidence="2 4">
        <text>N(6)-acetyl-L-lysyl-[protein] + NAD(+) + H2O = 2''-O-acetyl-ADP-D-ribose + nicotinamide + L-lysyl-[protein]</text>
        <dbReference type="Rhea" id="RHEA:43636"/>
        <dbReference type="Rhea" id="RHEA-COMP:9752"/>
        <dbReference type="Rhea" id="RHEA-COMP:10731"/>
        <dbReference type="ChEBI" id="CHEBI:15377"/>
        <dbReference type="ChEBI" id="CHEBI:17154"/>
        <dbReference type="ChEBI" id="CHEBI:29969"/>
        <dbReference type="ChEBI" id="CHEBI:57540"/>
        <dbReference type="ChEBI" id="CHEBI:61930"/>
        <dbReference type="ChEBI" id="CHEBI:83767"/>
        <dbReference type="EC" id="2.3.1.286"/>
    </reaction>
    <physiologicalReaction direction="left-to-right" evidence="2">
        <dbReference type="Rhea" id="RHEA:43637"/>
    </physiologicalReaction>
</comment>
<comment type="catalytic activity">
    <reaction evidence="2">
        <text>N(6)-glutaryl-L-lysyl-[protein] + NAD(+) + H2O = 2''-O-glutaryl-ADP-D-ribose + nicotinamide + L-lysyl-[protein]</text>
        <dbReference type="Rhea" id="RHEA:47664"/>
        <dbReference type="Rhea" id="RHEA-COMP:9752"/>
        <dbReference type="Rhea" id="RHEA-COMP:11875"/>
        <dbReference type="ChEBI" id="CHEBI:15377"/>
        <dbReference type="ChEBI" id="CHEBI:17154"/>
        <dbReference type="ChEBI" id="CHEBI:29969"/>
        <dbReference type="ChEBI" id="CHEBI:57540"/>
        <dbReference type="ChEBI" id="CHEBI:87828"/>
        <dbReference type="ChEBI" id="CHEBI:87829"/>
    </reaction>
    <physiologicalReaction direction="left-to-right" evidence="2">
        <dbReference type="Rhea" id="RHEA:47665"/>
    </physiologicalReaction>
</comment>
<comment type="catalytic activity">
    <reaction evidence="2">
        <text>N(6)-succinyl-L-lysyl-[protein] + NAD(+) + H2O = 2''-O-succinyl-ADP-D-ribose + nicotinamide + L-lysyl-[protein]</text>
        <dbReference type="Rhea" id="RHEA:47668"/>
        <dbReference type="Rhea" id="RHEA-COMP:9752"/>
        <dbReference type="Rhea" id="RHEA-COMP:11877"/>
        <dbReference type="ChEBI" id="CHEBI:15377"/>
        <dbReference type="ChEBI" id="CHEBI:17154"/>
        <dbReference type="ChEBI" id="CHEBI:29969"/>
        <dbReference type="ChEBI" id="CHEBI:57540"/>
        <dbReference type="ChEBI" id="CHEBI:87830"/>
        <dbReference type="ChEBI" id="CHEBI:87832"/>
    </reaction>
    <physiologicalReaction direction="left-to-right" evidence="2">
        <dbReference type="Rhea" id="RHEA:47669"/>
    </physiologicalReaction>
</comment>
<comment type="catalytic activity">
    <reaction evidence="1">
        <text>N(6)-propanoyl-L-lysyl-[protein] + NAD(+) + H2O = 3''-O-propanoyl-ADP-D-ribose + nicotinamide + L-lysyl-[protein]</text>
        <dbReference type="Rhea" id="RHEA:23500"/>
        <dbReference type="Rhea" id="RHEA-COMP:9752"/>
        <dbReference type="Rhea" id="RHEA-COMP:13758"/>
        <dbReference type="ChEBI" id="CHEBI:15377"/>
        <dbReference type="ChEBI" id="CHEBI:17154"/>
        <dbReference type="ChEBI" id="CHEBI:29969"/>
        <dbReference type="ChEBI" id="CHEBI:57540"/>
        <dbReference type="ChEBI" id="CHEBI:138019"/>
        <dbReference type="ChEBI" id="CHEBI:145015"/>
    </reaction>
    <physiologicalReaction direction="left-to-right" evidence="1">
        <dbReference type="Rhea" id="RHEA:23501"/>
    </physiologicalReaction>
</comment>
<comment type="catalytic activity">
    <reaction evidence="2">
        <text>N(6)-decanoyl-L-lysyl-[protein] + NAD(+) + H2O = 2''-O-decanoyl-ADP-D-ribose + nicotinamide + L-lysyl-[protein]</text>
        <dbReference type="Rhea" id="RHEA:70631"/>
        <dbReference type="Rhea" id="RHEA-COMP:9752"/>
        <dbReference type="Rhea" id="RHEA-COMP:17932"/>
        <dbReference type="ChEBI" id="CHEBI:15377"/>
        <dbReference type="ChEBI" id="CHEBI:17154"/>
        <dbReference type="ChEBI" id="CHEBI:29969"/>
        <dbReference type="ChEBI" id="CHEBI:57540"/>
        <dbReference type="ChEBI" id="CHEBI:143222"/>
        <dbReference type="ChEBI" id="CHEBI:189688"/>
    </reaction>
    <physiologicalReaction direction="left-to-right" evidence="2">
        <dbReference type="Rhea" id="RHEA:70632"/>
    </physiologicalReaction>
</comment>
<comment type="cofactor">
    <cofactor evidence="3">
        <name>Zn(2+)</name>
        <dbReference type="ChEBI" id="CHEBI:29105"/>
    </cofactor>
    <text evidence="3">Binds 1 zinc ion per subunit.</text>
</comment>
<comment type="activity regulation">
    <text evidence="2">NAD-dependent protein-lysine deacetylase and deacylase activities are activated by nucleic acids. Histone deacetylase activity is activated by DNA. Protein-lysine deacylase activity is activated by RNA. H3K18Ac histone deacetylase activity is inhibited by methylation at Arg-390. H3K18Ac histone deacetylase activity is inhibited by deubiquitination by USP7.</text>
</comment>
<comment type="subunit">
    <text evidence="1 2">Interacts with UBTF and the RNA polymerase I complex. Interacts with components of the B-WICH complex, such as MYBBP1A, SMARCA5/SNF2H and BAZ1B/WSTF. Interacts with ELK4, leading to stabilization at target promoters for H3K18Ac deacetylation. Interacts with histone H2A and/or histone H2B (By similarity). Interacts with DNMT1. Interacts with SIRT1 (By similarity).</text>
</comment>
<comment type="subcellular location">
    <subcellularLocation>
        <location evidence="2">Nucleus</location>
        <location evidence="2">Nucleolus</location>
    </subcellularLocation>
    <subcellularLocation>
        <location evidence="2">Nucleus</location>
        <location evidence="2">Nucleoplasm</location>
    </subcellularLocation>
    <subcellularLocation>
        <location evidence="2">Chromosome</location>
    </subcellularLocation>
    <subcellularLocation>
        <location evidence="2">Cytoplasm</location>
    </subcellularLocation>
    <text evidence="2">Mainly localizes in the nucleolus and nucleoplasm. Associated with rDNA promoter and transcribed region. Associated with nucleolar organizer regions during mitosis. In response to stress, released from nucleolus to nucleoplasm. Associated with chromatin. In response to DNA damage, recruited to DNA double-strand breaks (DSBs) sites. Located close to the nuclear membrane when in the cytoplasm.</text>
</comment>
<comment type="PTM">
    <text evidence="2">Phosphorylated during mitosis.</text>
</comment>
<comment type="PTM">
    <text evidence="2">Methylation at Arg-390 by PRMT6 inhibits the H3K18Ac histone deacetylase activity, promoting mitochondria biogenesis and maintaining mitochondria respiration.</text>
</comment>
<comment type="PTM">
    <text evidence="2">Ubiquitinated via 'Lys-63'-linked ubiquitin chains. Deubiquitinated by USP7, inhibiting the H3K18Ac histone deacetylase activity and regulating gluconeogenesis. Ubiquitinated by E3 ubiquitin-protein ligase complex containing FBXO7; leading to proteasomal degradation.</text>
</comment>
<comment type="similarity">
    <text evidence="6">Belongs to the sirtuin family. Class IV subfamily.</text>
</comment>
<reference key="1">
    <citation type="journal article" date="2004" name="Nature">
        <title>Genome sequence of the Brown Norway rat yields insights into mammalian evolution.</title>
        <authorList>
            <person name="Gibbs R.A."/>
            <person name="Weinstock G.M."/>
            <person name="Metzker M.L."/>
            <person name="Muzny D.M."/>
            <person name="Sodergren E.J."/>
            <person name="Scherer S."/>
            <person name="Scott G."/>
            <person name="Steffen D."/>
            <person name="Worley K.C."/>
            <person name="Burch P.E."/>
            <person name="Okwuonu G."/>
            <person name="Hines S."/>
            <person name="Lewis L."/>
            <person name="Deramo C."/>
            <person name="Delgado O."/>
            <person name="Dugan-Rocha S."/>
            <person name="Miner G."/>
            <person name="Morgan M."/>
            <person name="Hawes A."/>
            <person name="Gill R."/>
            <person name="Holt R.A."/>
            <person name="Adams M.D."/>
            <person name="Amanatides P.G."/>
            <person name="Baden-Tillson H."/>
            <person name="Barnstead M."/>
            <person name="Chin S."/>
            <person name="Evans C.A."/>
            <person name="Ferriera S."/>
            <person name="Fosler C."/>
            <person name="Glodek A."/>
            <person name="Gu Z."/>
            <person name="Jennings D."/>
            <person name="Kraft C.L."/>
            <person name="Nguyen T."/>
            <person name="Pfannkoch C.M."/>
            <person name="Sitter C."/>
            <person name="Sutton G.G."/>
            <person name="Venter J.C."/>
            <person name="Woodage T."/>
            <person name="Smith D."/>
            <person name="Lee H.-M."/>
            <person name="Gustafson E."/>
            <person name="Cahill P."/>
            <person name="Kana A."/>
            <person name="Doucette-Stamm L."/>
            <person name="Weinstock K."/>
            <person name="Fechtel K."/>
            <person name="Weiss R.B."/>
            <person name="Dunn D.M."/>
            <person name="Green E.D."/>
            <person name="Blakesley R.W."/>
            <person name="Bouffard G.G."/>
            <person name="De Jong P.J."/>
            <person name="Osoegawa K."/>
            <person name="Zhu B."/>
            <person name="Marra M."/>
            <person name="Schein J."/>
            <person name="Bosdet I."/>
            <person name="Fjell C."/>
            <person name="Jones S."/>
            <person name="Krzywinski M."/>
            <person name="Mathewson C."/>
            <person name="Siddiqui A."/>
            <person name="Wye N."/>
            <person name="McPherson J."/>
            <person name="Zhao S."/>
            <person name="Fraser C.M."/>
            <person name="Shetty J."/>
            <person name="Shatsman S."/>
            <person name="Geer K."/>
            <person name="Chen Y."/>
            <person name="Abramzon S."/>
            <person name="Nierman W.C."/>
            <person name="Havlak P.H."/>
            <person name="Chen R."/>
            <person name="Durbin K.J."/>
            <person name="Egan A."/>
            <person name="Ren Y."/>
            <person name="Song X.-Z."/>
            <person name="Li B."/>
            <person name="Liu Y."/>
            <person name="Qin X."/>
            <person name="Cawley S."/>
            <person name="Cooney A.J."/>
            <person name="D'Souza L.M."/>
            <person name="Martin K."/>
            <person name="Wu J.Q."/>
            <person name="Gonzalez-Garay M.L."/>
            <person name="Jackson A.R."/>
            <person name="Kalafus K.J."/>
            <person name="McLeod M.P."/>
            <person name="Milosavljevic A."/>
            <person name="Virk D."/>
            <person name="Volkov A."/>
            <person name="Wheeler D.A."/>
            <person name="Zhang Z."/>
            <person name="Bailey J.A."/>
            <person name="Eichler E.E."/>
            <person name="Tuzun E."/>
            <person name="Birney E."/>
            <person name="Mongin E."/>
            <person name="Ureta-Vidal A."/>
            <person name="Woodwark C."/>
            <person name="Zdobnov E."/>
            <person name="Bork P."/>
            <person name="Suyama M."/>
            <person name="Torrents D."/>
            <person name="Alexandersson M."/>
            <person name="Trask B.J."/>
            <person name="Young J.M."/>
            <person name="Huang H."/>
            <person name="Wang H."/>
            <person name="Xing H."/>
            <person name="Daniels S."/>
            <person name="Gietzen D."/>
            <person name="Schmidt J."/>
            <person name="Stevens K."/>
            <person name="Vitt U."/>
            <person name="Wingrove J."/>
            <person name="Camara F."/>
            <person name="Mar Alba M."/>
            <person name="Abril J.F."/>
            <person name="Guigo R."/>
            <person name="Smit A."/>
            <person name="Dubchak I."/>
            <person name="Rubin E.M."/>
            <person name="Couronne O."/>
            <person name="Poliakov A."/>
            <person name="Huebner N."/>
            <person name="Ganten D."/>
            <person name="Goesele C."/>
            <person name="Hummel O."/>
            <person name="Kreitler T."/>
            <person name="Lee Y.-A."/>
            <person name="Monti J."/>
            <person name="Schulz H."/>
            <person name="Zimdahl H."/>
            <person name="Himmelbauer H."/>
            <person name="Lehrach H."/>
            <person name="Jacob H.J."/>
            <person name="Bromberg S."/>
            <person name="Gullings-Handley J."/>
            <person name="Jensen-Seaman M.I."/>
            <person name="Kwitek A.E."/>
            <person name="Lazar J."/>
            <person name="Pasko D."/>
            <person name="Tonellato P.J."/>
            <person name="Twigger S."/>
            <person name="Ponting C.P."/>
            <person name="Duarte J.M."/>
            <person name="Rice S."/>
            <person name="Goodstadt L."/>
            <person name="Beatson S.A."/>
            <person name="Emes R.D."/>
            <person name="Winter E.E."/>
            <person name="Webber C."/>
            <person name="Brandt P."/>
            <person name="Nyakatura G."/>
            <person name="Adetobi M."/>
            <person name="Chiaromonte F."/>
            <person name="Elnitski L."/>
            <person name="Eswara P."/>
            <person name="Hardison R.C."/>
            <person name="Hou M."/>
            <person name="Kolbe D."/>
            <person name="Makova K."/>
            <person name="Miller W."/>
            <person name="Nekrutenko A."/>
            <person name="Riemer C."/>
            <person name="Schwartz S."/>
            <person name="Taylor J."/>
            <person name="Yang S."/>
            <person name="Zhang Y."/>
            <person name="Lindpaintner K."/>
            <person name="Andrews T.D."/>
            <person name="Caccamo M."/>
            <person name="Clamp M."/>
            <person name="Clarke L."/>
            <person name="Curwen V."/>
            <person name="Durbin R.M."/>
            <person name="Eyras E."/>
            <person name="Searle S.M."/>
            <person name="Cooper G.M."/>
            <person name="Batzoglou S."/>
            <person name="Brudno M."/>
            <person name="Sidow A."/>
            <person name="Stone E.A."/>
            <person name="Payseur B.A."/>
            <person name="Bourque G."/>
            <person name="Lopez-Otin C."/>
            <person name="Puente X.S."/>
            <person name="Chakrabarti K."/>
            <person name="Chatterji S."/>
            <person name="Dewey C."/>
            <person name="Pachter L."/>
            <person name="Bray N."/>
            <person name="Yap V.B."/>
            <person name="Caspi A."/>
            <person name="Tesler G."/>
            <person name="Pevzner P.A."/>
            <person name="Haussler D."/>
            <person name="Roskin K.M."/>
            <person name="Baertsch R."/>
            <person name="Clawson H."/>
            <person name="Furey T.S."/>
            <person name="Hinrichs A.S."/>
            <person name="Karolchik D."/>
            <person name="Kent W.J."/>
            <person name="Rosenbloom K.R."/>
            <person name="Trumbower H."/>
            <person name="Weirauch M."/>
            <person name="Cooper D.N."/>
            <person name="Stenson P.D."/>
            <person name="Ma B."/>
            <person name="Brent M."/>
            <person name="Arumugam M."/>
            <person name="Shteynberg D."/>
            <person name="Copley R.R."/>
            <person name="Taylor M.S."/>
            <person name="Riethman H."/>
            <person name="Mudunuri U."/>
            <person name="Peterson J."/>
            <person name="Guyer M."/>
            <person name="Felsenfeld A."/>
            <person name="Old S."/>
            <person name="Mockrin S."/>
            <person name="Collins F.S."/>
        </authorList>
    </citation>
    <scope>NUCLEOTIDE SEQUENCE [LARGE SCALE GENOMIC DNA]</scope>
    <source>
        <strain>Brown Norway</strain>
    </source>
</reference>
<reference key="2">
    <citation type="submission" date="2005-07" db="EMBL/GenBank/DDBJ databases">
        <authorList>
            <person name="Mural R.J."/>
            <person name="Adams M.D."/>
            <person name="Myers E.W."/>
            <person name="Smith H.O."/>
            <person name="Venter J.C."/>
        </authorList>
    </citation>
    <scope>NUCLEOTIDE SEQUENCE [LARGE SCALE GENOMIC DNA]</scope>
    <source>
        <strain>Brown Norway</strain>
    </source>
</reference>
<reference key="3">
    <citation type="journal article" date="2004" name="Genome Res.">
        <title>The status, quality, and expansion of the NIH full-length cDNA project: the Mammalian Gene Collection (MGC).</title>
        <authorList>
            <consortium name="The MGC Project Team"/>
        </authorList>
    </citation>
    <scope>NUCLEOTIDE SEQUENCE [LARGE SCALE MRNA]</scope>
    <source>
        <tissue>Lung</tissue>
    </source>
</reference>
<name>SIR7_RAT</name>
<organism>
    <name type="scientific">Rattus norvegicus</name>
    <name type="common">Rat</name>
    <dbReference type="NCBI Taxonomy" id="10116"/>
    <lineage>
        <taxon>Eukaryota</taxon>
        <taxon>Metazoa</taxon>
        <taxon>Chordata</taxon>
        <taxon>Craniata</taxon>
        <taxon>Vertebrata</taxon>
        <taxon>Euteleostomi</taxon>
        <taxon>Mammalia</taxon>
        <taxon>Eutheria</taxon>
        <taxon>Euarchontoglires</taxon>
        <taxon>Glires</taxon>
        <taxon>Rodentia</taxon>
        <taxon>Myomorpha</taxon>
        <taxon>Muroidea</taxon>
        <taxon>Muridae</taxon>
        <taxon>Murinae</taxon>
        <taxon>Rattus</taxon>
    </lineage>
</organism>
<protein>
    <recommendedName>
        <fullName>NAD-dependent protein deacetylase sirtuin-7</fullName>
        <ecNumber evidence="4">2.3.1.286</ecNumber>
    </recommendedName>
    <alternativeName>
        <fullName>NAD-dependent protein deacylase sirtuin-7</fullName>
        <ecNumber evidence="2">2.3.1.-</ecNumber>
    </alternativeName>
    <alternativeName>
        <fullName>Regulatory protein SIR2 homolog 7</fullName>
    </alternativeName>
    <alternativeName>
        <fullName>SIR2-like protein 7</fullName>
    </alternativeName>
</protein>